<reference key="1">
    <citation type="journal article" date="2002" name="Proc. Natl. Acad. Sci. U.S.A.">
        <title>The genome sequence of Bifidobacterium longum reflects its adaptation to the human gastrointestinal tract.</title>
        <authorList>
            <person name="Schell M.A."/>
            <person name="Karmirantzou M."/>
            <person name="Snel B."/>
            <person name="Vilanova D."/>
            <person name="Berger B."/>
            <person name="Pessi G."/>
            <person name="Zwahlen M.-C."/>
            <person name="Desiere F."/>
            <person name="Bork P."/>
            <person name="Delley M."/>
            <person name="Pridmore R.D."/>
            <person name="Arigoni F."/>
        </authorList>
    </citation>
    <scope>NUCLEOTIDE SEQUENCE [LARGE SCALE GENOMIC DNA]</scope>
    <source>
        <strain>NCC 2705</strain>
    </source>
</reference>
<protein>
    <recommendedName>
        <fullName evidence="1">Small ribosomal subunit protein uS7</fullName>
    </recommendedName>
    <alternativeName>
        <fullName evidence="2">30S ribosomal protein S7</fullName>
    </alternativeName>
</protein>
<gene>
    <name evidence="1" type="primary">rpsG</name>
    <name type="ordered locus">BL1099</name>
</gene>
<evidence type="ECO:0000255" key="1">
    <source>
        <dbReference type="HAMAP-Rule" id="MF_00480"/>
    </source>
</evidence>
<evidence type="ECO:0000305" key="2"/>
<dbReference type="EMBL" id="AE014295">
    <property type="protein sequence ID" value="AAN24907.1"/>
    <property type="molecule type" value="Genomic_DNA"/>
</dbReference>
<dbReference type="RefSeq" id="NP_696271.1">
    <property type="nucleotide sequence ID" value="NC_004307.2"/>
</dbReference>
<dbReference type="RefSeq" id="WP_003828652.1">
    <property type="nucleotide sequence ID" value="NC_004307.2"/>
</dbReference>
<dbReference type="SMR" id="Q8G5B5"/>
<dbReference type="STRING" id="206672.BL1099"/>
<dbReference type="EnsemblBacteria" id="AAN24907">
    <property type="protein sequence ID" value="AAN24907"/>
    <property type="gene ID" value="BL1099"/>
</dbReference>
<dbReference type="GeneID" id="69577753"/>
<dbReference type="KEGG" id="blo:BL1099"/>
<dbReference type="PATRIC" id="fig|206672.9.peg.807"/>
<dbReference type="HOGENOM" id="CLU_072226_1_1_11"/>
<dbReference type="OrthoDB" id="9807653at2"/>
<dbReference type="PhylomeDB" id="Q8G5B5"/>
<dbReference type="PRO" id="PR:Q8G5B5"/>
<dbReference type="Proteomes" id="UP000000439">
    <property type="component" value="Chromosome"/>
</dbReference>
<dbReference type="GO" id="GO:0015935">
    <property type="term" value="C:small ribosomal subunit"/>
    <property type="evidence" value="ECO:0007669"/>
    <property type="project" value="InterPro"/>
</dbReference>
<dbReference type="GO" id="GO:0019843">
    <property type="term" value="F:rRNA binding"/>
    <property type="evidence" value="ECO:0007669"/>
    <property type="project" value="UniProtKB-UniRule"/>
</dbReference>
<dbReference type="GO" id="GO:0003735">
    <property type="term" value="F:structural constituent of ribosome"/>
    <property type="evidence" value="ECO:0007669"/>
    <property type="project" value="InterPro"/>
</dbReference>
<dbReference type="GO" id="GO:0000049">
    <property type="term" value="F:tRNA binding"/>
    <property type="evidence" value="ECO:0007669"/>
    <property type="project" value="UniProtKB-UniRule"/>
</dbReference>
<dbReference type="GO" id="GO:0006412">
    <property type="term" value="P:translation"/>
    <property type="evidence" value="ECO:0007669"/>
    <property type="project" value="UniProtKB-UniRule"/>
</dbReference>
<dbReference type="CDD" id="cd14869">
    <property type="entry name" value="uS7_Bacteria"/>
    <property type="match status" value="1"/>
</dbReference>
<dbReference type="FunFam" id="1.10.455.10:FF:000001">
    <property type="entry name" value="30S ribosomal protein S7"/>
    <property type="match status" value="1"/>
</dbReference>
<dbReference type="Gene3D" id="1.10.455.10">
    <property type="entry name" value="Ribosomal protein S7 domain"/>
    <property type="match status" value="1"/>
</dbReference>
<dbReference type="HAMAP" id="MF_00480_B">
    <property type="entry name" value="Ribosomal_uS7_B"/>
    <property type="match status" value="1"/>
</dbReference>
<dbReference type="InterPro" id="IPR000235">
    <property type="entry name" value="Ribosomal_uS7"/>
</dbReference>
<dbReference type="InterPro" id="IPR005717">
    <property type="entry name" value="Ribosomal_uS7_bac/org-type"/>
</dbReference>
<dbReference type="InterPro" id="IPR020606">
    <property type="entry name" value="Ribosomal_uS7_CS"/>
</dbReference>
<dbReference type="InterPro" id="IPR023798">
    <property type="entry name" value="Ribosomal_uS7_dom"/>
</dbReference>
<dbReference type="InterPro" id="IPR036823">
    <property type="entry name" value="Ribosomal_uS7_dom_sf"/>
</dbReference>
<dbReference type="NCBIfam" id="TIGR01029">
    <property type="entry name" value="rpsG_bact"/>
    <property type="match status" value="1"/>
</dbReference>
<dbReference type="PANTHER" id="PTHR11205">
    <property type="entry name" value="RIBOSOMAL PROTEIN S7"/>
    <property type="match status" value="1"/>
</dbReference>
<dbReference type="Pfam" id="PF00177">
    <property type="entry name" value="Ribosomal_S7"/>
    <property type="match status" value="1"/>
</dbReference>
<dbReference type="PIRSF" id="PIRSF002122">
    <property type="entry name" value="RPS7p_RPS7a_RPS5e_RPS7o"/>
    <property type="match status" value="1"/>
</dbReference>
<dbReference type="SUPFAM" id="SSF47973">
    <property type="entry name" value="Ribosomal protein S7"/>
    <property type="match status" value="1"/>
</dbReference>
<dbReference type="PROSITE" id="PS00052">
    <property type="entry name" value="RIBOSOMAL_S7"/>
    <property type="match status" value="1"/>
</dbReference>
<comment type="function">
    <text evidence="1">One of the primary rRNA binding proteins, it binds directly to 16S rRNA where it nucleates assembly of the head domain of the 30S subunit. Is located at the subunit interface close to the decoding center, probably blocks exit of the E-site tRNA.</text>
</comment>
<comment type="subunit">
    <text evidence="1">Part of the 30S ribosomal subunit. Contacts proteins S9 and S11.</text>
</comment>
<comment type="similarity">
    <text evidence="1">Belongs to the universal ribosomal protein uS7 family.</text>
</comment>
<feature type="chain" id="PRO_0000124224" description="Small ribosomal subunit protein uS7">
    <location>
        <begin position="1"/>
        <end position="156"/>
    </location>
</feature>
<keyword id="KW-1185">Reference proteome</keyword>
<keyword id="KW-0687">Ribonucleoprotein</keyword>
<keyword id="KW-0689">Ribosomal protein</keyword>
<keyword id="KW-0694">RNA-binding</keyword>
<keyword id="KW-0699">rRNA-binding</keyword>
<keyword id="KW-0820">tRNA-binding</keyword>
<accession>Q8G5B5</accession>
<proteinExistence type="inferred from homology"/>
<name>RS7_BIFLO</name>
<sequence>MSRKGPSKKHVVLPDPIYGSTVVAQLINKILLDGKKSIAEDIVYSALDMVKEKSDQEPVAVLKRALDNIRPSLEVRSRRVGGATYQVPVEVKPNRANTLSLRWLTDFSRARREKTMAERLANEILDASNGLGASVKRREDTHKMAEANKAFAHYRW</sequence>
<organism>
    <name type="scientific">Bifidobacterium longum (strain NCC 2705)</name>
    <dbReference type="NCBI Taxonomy" id="206672"/>
    <lineage>
        <taxon>Bacteria</taxon>
        <taxon>Bacillati</taxon>
        <taxon>Actinomycetota</taxon>
        <taxon>Actinomycetes</taxon>
        <taxon>Bifidobacteriales</taxon>
        <taxon>Bifidobacteriaceae</taxon>
        <taxon>Bifidobacterium</taxon>
    </lineage>
</organism>